<protein>
    <recommendedName>
        <fullName>Light-harvesting protein B-800/850 alpha chain</fullName>
    </recommendedName>
    <alternativeName>
        <fullName>Antenna pigment protein alpha chain</fullName>
    </alternativeName>
    <alternativeName>
        <fullName>LH-2</fullName>
    </alternativeName>
</protein>
<accession>P0C0Y0</accession>
<accession>P02946</accession>
<name>LHA2_CERSP</name>
<keyword id="KW-0042">Antenna complex</keyword>
<keyword id="KW-0076">Bacteriochlorophyll</keyword>
<keyword id="KW-0997">Cell inner membrane</keyword>
<keyword id="KW-1003">Cell membrane</keyword>
<keyword id="KW-0148">Chlorophyll</keyword>
<keyword id="KW-0157">Chromophore</keyword>
<keyword id="KW-0903">Direct protein sequencing</keyword>
<keyword id="KW-0437">Light-harvesting polypeptide</keyword>
<keyword id="KW-0460">Magnesium</keyword>
<keyword id="KW-0472">Membrane</keyword>
<keyword id="KW-0479">Metal-binding</keyword>
<keyword id="KW-0812">Transmembrane</keyword>
<keyword id="KW-1133">Transmembrane helix</keyword>
<sequence>MTNGKIWLVVKPTVGVPLFLSAAVIASVVIHAAVLTTTTWLPAYYQGSAAVAAE</sequence>
<comment type="function">
    <text>Antenna complexes are light-harvesting systems, which transfer the excitation energy to the reaction centers.</text>
</comment>
<comment type="subunit">
    <text>The core complex is formed by different alpha and beta chains, binding bacteriochlorophyll molecules, and arranged most probably in tetrameric structures disposed around the reaction center. The non-pigmented gamma chains may constitute additional components.</text>
</comment>
<comment type="subcellular location">
    <subcellularLocation>
        <location>Cell inner membrane</location>
        <topology>Single-pass type II membrane protein</topology>
    </subcellularLocation>
</comment>
<comment type="miscellaneous">
    <text>This polypeptide (LH-2) and LH-3B constitute the B-800/850 complex of R.sphaeroides 2.4.1 and the spectrally altered B-850 complex isolated from the blue-green mutant R-26.1, which absorbs at 860 nM.</text>
</comment>
<comment type="similarity">
    <text evidence="2">Belongs to the antenna complex alpha subunit family.</text>
</comment>
<feature type="chain" id="PRO_0000099803" description="Light-harvesting protein B-800/850 alpha chain">
    <location>
        <begin position="1"/>
        <end position="54"/>
    </location>
</feature>
<feature type="topological domain" description="Cytoplasmic" evidence="1">
    <location>
        <begin position="1"/>
        <end position="14"/>
    </location>
</feature>
<feature type="transmembrane region" description="Helical" evidence="1">
    <location>
        <begin position="15"/>
        <end position="35"/>
    </location>
</feature>
<feature type="topological domain" description="Periplasmic" evidence="1">
    <location>
        <begin position="36"/>
        <end position="54"/>
    </location>
</feature>
<feature type="binding site" description="axial binding residue" evidence="1">
    <location>
        <position position="31"/>
    </location>
    <ligand>
        <name>a bacteriochlorophyll</name>
        <dbReference type="ChEBI" id="CHEBI:38201"/>
    </ligand>
    <ligandPart>
        <name>Mg</name>
        <dbReference type="ChEBI" id="CHEBI:25107"/>
    </ligandPart>
</feature>
<feature type="sequence variant" description="In strain: R-26.1.">
    <original>V</original>
    <variation>F</variation>
    <location>
        <position position="24"/>
    </location>
</feature>
<proteinExistence type="evidence at protein level"/>
<organism>
    <name type="scientific">Cereibacter sphaeroides</name>
    <name type="common">Rhodobacter sphaeroides</name>
    <dbReference type="NCBI Taxonomy" id="1063"/>
    <lineage>
        <taxon>Bacteria</taxon>
        <taxon>Pseudomonadati</taxon>
        <taxon>Pseudomonadota</taxon>
        <taxon>Alphaproteobacteria</taxon>
        <taxon>Rhodobacterales</taxon>
        <taxon>Paracoccaceae</taxon>
        <taxon>Cereibacter</taxon>
    </lineage>
</organism>
<evidence type="ECO:0000255" key="1"/>
<evidence type="ECO:0000305" key="2"/>
<dbReference type="EMBL" id="X05200">
    <property type="protein sequence ID" value="CAA28833.1"/>
    <property type="molecule type" value="Genomic_DNA"/>
</dbReference>
<dbReference type="EMBL" id="M28360">
    <property type="protein sequence ID" value="AAA26131.1"/>
    <property type="molecule type" value="Genomic_DNA"/>
</dbReference>
<dbReference type="PIR" id="A03446">
    <property type="entry name" value="LBRF2S"/>
</dbReference>
<dbReference type="PIR" id="A27087">
    <property type="entry name" value="A27087"/>
</dbReference>
<dbReference type="RefSeq" id="WP_002720480.1">
    <property type="nucleotide sequence ID" value="NZ_WTFI01000017.1"/>
</dbReference>
<dbReference type="SMR" id="P0C0Y0"/>
<dbReference type="OMA" id="SHTTWFP"/>
<dbReference type="GO" id="GO:0019866">
    <property type="term" value="C:organelle inner membrane"/>
    <property type="evidence" value="ECO:0007669"/>
    <property type="project" value="InterPro"/>
</dbReference>
<dbReference type="GO" id="GO:0005886">
    <property type="term" value="C:plasma membrane"/>
    <property type="evidence" value="ECO:0007669"/>
    <property type="project" value="UniProtKB-SubCell"/>
</dbReference>
<dbReference type="GO" id="GO:0030077">
    <property type="term" value="C:plasma membrane light-harvesting complex"/>
    <property type="evidence" value="ECO:0007669"/>
    <property type="project" value="InterPro"/>
</dbReference>
<dbReference type="GO" id="GO:0042314">
    <property type="term" value="F:bacteriochlorophyll binding"/>
    <property type="evidence" value="ECO:0007669"/>
    <property type="project" value="UniProtKB-KW"/>
</dbReference>
<dbReference type="GO" id="GO:0045156">
    <property type="term" value="F:electron transporter, transferring electrons within the cyclic electron transport pathway of photosynthesis activity"/>
    <property type="evidence" value="ECO:0007669"/>
    <property type="project" value="InterPro"/>
</dbReference>
<dbReference type="GO" id="GO:0046872">
    <property type="term" value="F:metal ion binding"/>
    <property type="evidence" value="ECO:0007669"/>
    <property type="project" value="UniProtKB-KW"/>
</dbReference>
<dbReference type="GO" id="GO:0019684">
    <property type="term" value="P:photosynthesis, light reaction"/>
    <property type="evidence" value="ECO:0007669"/>
    <property type="project" value="InterPro"/>
</dbReference>
<dbReference type="Gene3D" id="4.10.220.20">
    <property type="entry name" value="Light-harvesting complex"/>
    <property type="match status" value="1"/>
</dbReference>
<dbReference type="InterPro" id="IPR000066">
    <property type="entry name" value="Antenna_a/b"/>
</dbReference>
<dbReference type="InterPro" id="IPR018332">
    <property type="entry name" value="Antenna_alpha"/>
</dbReference>
<dbReference type="InterPro" id="IPR002361">
    <property type="entry name" value="Antenna_alpha_CS"/>
</dbReference>
<dbReference type="InterPro" id="IPR035889">
    <property type="entry name" value="Light-harvesting_complex"/>
</dbReference>
<dbReference type="Pfam" id="PF00556">
    <property type="entry name" value="LHC"/>
    <property type="match status" value="1"/>
</dbReference>
<dbReference type="PRINTS" id="PR00673">
    <property type="entry name" value="LIGHTHARVSTA"/>
</dbReference>
<dbReference type="SUPFAM" id="SSF56918">
    <property type="entry name" value="Light-harvesting complex subunits"/>
    <property type="match status" value="1"/>
</dbReference>
<dbReference type="PROSITE" id="PS00968">
    <property type="entry name" value="ANTENNA_COMP_ALPHA"/>
    <property type="match status" value="1"/>
</dbReference>
<gene>
    <name type="primary">pucA</name>
</gene>
<reference key="1">
    <citation type="journal article" date="1984" name="Hoppe-Seyler's Z. Physiol. Chem.">
        <title>The light-harvesting polypeptides of Rhodopseudomonas sphaeroides R-26.1. I. Isolation, purification and sequence analyses.</title>
        <authorList>
            <person name="Theiler R."/>
            <person name="Suter F."/>
            <person name="Wiemken V."/>
            <person name="Zuber H."/>
        </authorList>
    </citation>
    <scope>PROTEIN SEQUENCE</scope>
    <source>
        <strain>R-26.1</strain>
    </source>
</reference>
<reference key="2">
    <citation type="journal article" date="1987" name="FEBS Lett.">
        <title>Cloning, nucleotide sequence and transfer of genes for the B800-850 light harvesting complex of Rhodobacter sphaeroides.</title>
        <authorList>
            <person name="Ashby M.K."/>
            <person name="Coomber S.A."/>
            <person name="Hunter C.N."/>
        </authorList>
    </citation>
    <scope>NUCLEOTIDE SEQUENCE [GENOMIC DNA]</scope>
</reference>
<reference key="3">
    <citation type="journal article" date="1989" name="J. Gen. Microbiol.">
        <title>Characterization and complementation of a mutant of Rhodobacter sphaeroides with a chromosomal deletion in the light-harvesting (LH2) genes.</title>
        <authorList>
            <person name="Burgess J.G."/>
            <person name="Ashby M.K."/>
            <person name="Hunter C.N."/>
        </authorList>
    </citation>
    <scope>NUCLEOTIDE SEQUENCE [GENOMIC DNA]</scope>
</reference>